<gene>
    <name evidence="1" type="primary">ihfB</name>
    <name evidence="1" type="synonym">himD</name>
    <name type="ordered locus">Ping_3012</name>
</gene>
<sequence length="95" mass="10682">MTKSDLIERLTSKHFQLSVKEVEDSVKETLTLMANSLAQGERIEVRGFGSFSLHYRAPRVGRNPKTGDRVELDGKYVPHFKPGKALRERVNAANA</sequence>
<keyword id="KW-0233">DNA recombination</keyword>
<keyword id="KW-0238">DNA-binding</keyword>
<keyword id="KW-1185">Reference proteome</keyword>
<keyword id="KW-0804">Transcription</keyword>
<keyword id="KW-0805">Transcription regulation</keyword>
<keyword id="KW-0810">Translation regulation</keyword>
<name>IHFB_PSYIN</name>
<evidence type="ECO:0000255" key="1">
    <source>
        <dbReference type="HAMAP-Rule" id="MF_00381"/>
    </source>
</evidence>
<feature type="chain" id="PRO_1000060639" description="Integration host factor subunit beta">
    <location>
        <begin position="1"/>
        <end position="95"/>
    </location>
</feature>
<dbReference type="EMBL" id="CP000510">
    <property type="protein sequence ID" value="ABM04714.1"/>
    <property type="molecule type" value="Genomic_DNA"/>
</dbReference>
<dbReference type="RefSeq" id="WP_011771268.1">
    <property type="nucleotide sequence ID" value="NC_008709.1"/>
</dbReference>
<dbReference type="SMR" id="A1SYZ9"/>
<dbReference type="STRING" id="357804.Ping_3012"/>
<dbReference type="KEGG" id="pin:Ping_3012"/>
<dbReference type="eggNOG" id="COG0776">
    <property type="taxonomic scope" value="Bacteria"/>
</dbReference>
<dbReference type="HOGENOM" id="CLU_105066_2_0_6"/>
<dbReference type="OrthoDB" id="9804203at2"/>
<dbReference type="Proteomes" id="UP000000639">
    <property type="component" value="Chromosome"/>
</dbReference>
<dbReference type="GO" id="GO:0005694">
    <property type="term" value="C:chromosome"/>
    <property type="evidence" value="ECO:0007669"/>
    <property type="project" value="InterPro"/>
</dbReference>
<dbReference type="GO" id="GO:0005829">
    <property type="term" value="C:cytosol"/>
    <property type="evidence" value="ECO:0007669"/>
    <property type="project" value="TreeGrafter"/>
</dbReference>
<dbReference type="GO" id="GO:0003677">
    <property type="term" value="F:DNA binding"/>
    <property type="evidence" value="ECO:0007669"/>
    <property type="project" value="UniProtKB-UniRule"/>
</dbReference>
<dbReference type="GO" id="GO:0030527">
    <property type="term" value="F:structural constituent of chromatin"/>
    <property type="evidence" value="ECO:0007669"/>
    <property type="project" value="InterPro"/>
</dbReference>
<dbReference type="GO" id="GO:0006310">
    <property type="term" value="P:DNA recombination"/>
    <property type="evidence" value="ECO:0007669"/>
    <property type="project" value="UniProtKB-UniRule"/>
</dbReference>
<dbReference type="GO" id="GO:0006355">
    <property type="term" value="P:regulation of DNA-templated transcription"/>
    <property type="evidence" value="ECO:0007669"/>
    <property type="project" value="UniProtKB-UniRule"/>
</dbReference>
<dbReference type="GO" id="GO:0006417">
    <property type="term" value="P:regulation of translation"/>
    <property type="evidence" value="ECO:0007669"/>
    <property type="project" value="UniProtKB-UniRule"/>
</dbReference>
<dbReference type="CDD" id="cd13836">
    <property type="entry name" value="IHF_B"/>
    <property type="match status" value="1"/>
</dbReference>
<dbReference type="FunFam" id="4.10.520.10:FF:000003">
    <property type="entry name" value="Integration host factor subunit beta"/>
    <property type="match status" value="1"/>
</dbReference>
<dbReference type="Gene3D" id="4.10.520.10">
    <property type="entry name" value="IHF-like DNA-binding proteins"/>
    <property type="match status" value="1"/>
</dbReference>
<dbReference type="HAMAP" id="MF_00381">
    <property type="entry name" value="IHF_beta"/>
    <property type="match status" value="1"/>
</dbReference>
<dbReference type="InterPro" id="IPR000119">
    <property type="entry name" value="Hist_DNA-bd"/>
</dbReference>
<dbReference type="InterPro" id="IPR020816">
    <property type="entry name" value="Histone-like_DNA-bd_CS"/>
</dbReference>
<dbReference type="InterPro" id="IPR010992">
    <property type="entry name" value="IHF-like_DNA-bd_dom_sf"/>
</dbReference>
<dbReference type="InterPro" id="IPR005685">
    <property type="entry name" value="IHF_beta"/>
</dbReference>
<dbReference type="NCBIfam" id="TIGR00988">
    <property type="entry name" value="hip"/>
    <property type="match status" value="1"/>
</dbReference>
<dbReference type="NCBIfam" id="NF001222">
    <property type="entry name" value="PRK00199.1"/>
    <property type="match status" value="1"/>
</dbReference>
<dbReference type="PANTHER" id="PTHR33175">
    <property type="entry name" value="DNA-BINDING PROTEIN HU"/>
    <property type="match status" value="1"/>
</dbReference>
<dbReference type="PANTHER" id="PTHR33175:SF5">
    <property type="entry name" value="INTEGRATION HOST FACTOR SUBUNIT BETA"/>
    <property type="match status" value="1"/>
</dbReference>
<dbReference type="Pfam" id="PF00216">
    <property type="entry name" value="Bac_DNA_binding"/>
    <property type="match status" value="1"/>
</dbReference>
<dbReference type="PRINTS" id="PR01727">
    <property type="entry name" value="DNABINDINGHU"/>
</dbReference>
<dbReference type="SMART" id="SM00411">
    <property type="entry name" value="BHL"/>
    <property type="match status" value="1"/>
</dbReference>
<dbReference type="SUPFAM" id="SSF47729">
    <property type="entry name" value="IHF-like DNA-binding proteins"/>
    <property type="match status" value="1"/>
</dbReference>
<dbReference type="PROSITE" id="PS00045">
    <property type="entry name" value="HISTONE_LIKE"/>
    <property type="match status" value="1"/>
</dbReference>
<proteinExistence type="inferred from homology"/>
<organism>
    <name type="scientific">Psychromonas ingrahamii (strain DSM 17664 / CCUG 51855 / 37)</name>
    <dbReference type="NCBI Taxonomy" id="357804"/>
    <lineage>
        <taxon>Bacteria</taxon>
        <taxon>Pseudomonadati</taxon>
        <taxon>Pseudomonadota</taxon>
        <taxon>Gammaproteobacteria</taxon>
        <taxon>Alteromonadales</taxon>
        <taxon>Psychromonadaceae</taxon>
        <taxon>Psychromonas</taxon>
    </lineage>
</organism>
<accession>A1SYZ9</accession>
<protein>
    <recommendedName>
        <fullName evidence="1">Integration host factor subunit beta</fullName>
        <shortName evidence="1">IHF-beta</shortName>
    </recommendedName>
</protein>
<comment type="function">
    <text evidence="1">This protein is one of the two subunits of integration host factor, a specific DNA-binding protein that functions in genetic recombination as well as in transcriptional and translational control.</text>
</comment>
<comment type="subunit">
    <text evidence="1">Heterodimer of an alpha and a beta chain.</text>
</comment>
<comment type="similarity">
    <text evidence="1">Belongs to the bacterial histone-like protein family.</text>
</comment>
<reference key="1">
    <citation type="journal article" date="2008" name="BMC Genomics">
        <title>Genomics of an extreme psychrophile, Psychromonas ingrahamii.</title>
        <authorList>
            <person name="Riley M."/>
            <person name="Staley J.T."/>
            <person name="Danchin A."/>
            <person name="Wang T.Z."/>
            <person name="Brettin T.S."/>
            <person name="Hauser L.J."/>
            <person name="Land M.L."/>
            <person name="Thompson L.S."/>
        </authorList>
    </citation>
    <scope>NUCLEOTIDE SEQUENCE [LARGE SCALE GENOMIC DNA]</scope>
    <source>
        <strain>DSM 17664 / CCUG 51855 / 37</strain>
    </source>
</reference>